<reference key="1">
    <citation type="journal article" date="2005" name="Nature">
        <title>Generation and annotation of the DNA sequences of human chromosomes 2 and 4.</title>
        <authorList>
            <person name="Hillier L.W."/>
            <person name="Graves T.A."/>
            <person name="Fulton R.S."/>
            <person name="Fulton L.A."/>
            <person name="Pepin K.H."/>
            <person name="Minx P."/>
            <person name="Wagner-McPherson C."/>
            <person name="Layman D."/>
            <person name="Wylie K."/>
            <person name="Sekhon M."/>
            <person name="Becker M.C."/>
            <person name="Fewell G.A."/>
            <person name="Delehaunty K.D."/>
            <person name="Miner T.L."/>
            <person name="Nash W.E."/>
            <person name="Kremitzki C."/>
            <person name="Oddy L."/>
            <person name="Du H."/>
            <person name="Sun H."/>
            <person name="Bradshaw-Cordum H."/>
            <person name="Ali J."/>
            <person name="Carter J."/>
            <person name="Cordes M."/>
            <person name="Harris A."/>
            <person name="Isak A."/>
            <person name="van Brunt A."/>
            <person name="Nguyen C."/>
            <person name="Du F."/>
            <person name="Courtney L."/>
            <person name="Kalicki J."/>
            <person name="Ozersky P."/>
            <person name="Abbott S."/>
            <person name="Armstrong J."/>
            <person name="Belter E.A."/>
            <person name="Caruso L."/>
            <person name="Cedroni M."/>
            <person name="Cotton M."/>
            <person name="Davidson T."/>
            <person name="Desai A."/>
            <person name="Elliott G."/>
            <person name="Erb T."/>
            <person name="Fronick C."/>
            <person name="Gaige T."/>
            <person name="Haakenson W."/>
            <person name="Haglund K."/>
            <person name="Holmes A."/>
            <person name="Harkins R."/>
            <person name="Kim K."/>
            <person name="Kruchowski S.S."/>
            <person name="Strong C.M."/>
            <person name="Grewal N."/>
            <person name="Goyea E."/>
            <person name="Hou S."/>
            <person name="Levy A."/>
            <person name="Martinka S."/>
            <person name="Mead K."/>
            <person name="McLellan M.D."/>
            <person name="Meyer R."/>
            <person name="Randall-Maher J."/>
            <person name="Tomlinson C."/>
            <person name="Dauphin-Kohlberg S."/>
            <person name="Kozlowicz-Reilly A."/>
            <person name="Shah N."/>
            <person name="Swearengen-Shahid S."/>
            <person name="Snider J."/>
            <person name="Strong J.T."/>
            <person name="Thompson J."/>
            <person name="Yoakum M."/>
            <person name="Leonard S."/>
            <person name="Pearman C."/>
            <person name="Trani L."/>
            <person name="Radionenko M."/>
            <person name="Waligorski J.E."/>
            <person name="Wang C."/>
            <person name="Rock S.M."/>
            <person name="Tin-Wollam A.-M."/>
            <person name="Maupin R."/>
            <person name="Latreille P."/>
            <person name="Wendl M.C."/>
            <person name="Yang S.-P."/>
            <person name="Pohl C."/>
            <person name="Wallis J.W."/>
            <person name="Spieth J."/>
            <person name="Bieri T.A."/>
            <person name="Berkowicz N."/>
            <person name="Nelson J.O."/>
            <person name="Osborne J."/>
            <person name="Ding L."/>
            <person name="Meyer R."/>
            <person name="Sabo A."/>
            <person name="Shotland Y."/>
            <person name="Sinha P."/>
            <person name="Wohldmann P.E."/>
            <person name="Cook L.L."/>
            <person name="Hickenbotham M.T."/>
            <person name="Eldred J."/>
            <person name="Williams D."/>
            <person name="Jones T.A."/>
            <person name="She X."/>
            <person name="Ciccarelli F.D."/>
            <person name="Izaurralde E."/>
            <person name="Taylor J."/>
            <person name="Schmutz J."/>
            <person name="Myers R.M."/>
            <person name="Cox D.R."/>
            <person name="Huang X."/>
            <person name="McPherson J.D."/>
            <person name="Mardis E.R."/>
            <person name="Clifton S.W."/>
            <person name="Warren W.C."/>
            <person name="Chinwalla A.T."/>
            <person name="Eddy S.R."/>
            <person name="Marra M.A."/>
            <person name="Ovcharenko I."/>
            <person name="Furey T.S."/>
            <person name="Miller W."/>
            <person name="Eichler E.E."/>
            <person name="Bork P."/>
            <person name="Suyama M."/>
            <person name="Torrents D."/>
            <person name="Waterston R.H."/>
            <person name="Wilson R.K."/>
        </authorList>
    </citation>
    <scope>NUCLEOTIDE SEQUENCE [LARGE SCALE GENOMIC DNA]</scope>
</reference>
<reference key="2">
    <citation type="submission" date="2005-07" db="EMBL/GenBank/DDBJ databases">
        <authorList>
            <person name="Mural R.J."/>
            <person name="Istrail S."/>
            <person name="Sutton G.G."/>
            <person name="Florea L."/>
            <person name="Halpern A.L."/>
            <person name="Mobarry C.M."/>
            <person name="Lippert R."/>
            <person name="Walenz B."/>
            <person name="Shatkay H."/>
            <person name="Dew I."/>
            <person name="Miller J.R."/>
            <person name="Flanigan M.J."/>
            <person name="Edwards N.J."/>
            <person name="Bolanos R."/>
            <person name="Fasulo D."/>
            <person name="Halldorsson B.V."/>
            <person name="Hannenhalli S."/>
            <person name="Turner R."/>
            <person name="Yooseph S."/>
            <person name="Lu F."/>
            <person name="Nusskern D.R."/>
            <person name="Shue B.C."/>
            <person name="Zheng X.H."/>
            <person name="Zhong F."/>
            <person name="Delcher A.L."/>
            <person name="Huson D.H."/>
            <person name="Kravitz S.A."/>
            <person name="Mouchard L."/>
            <person name="Reinert K."/>
            <person name="Remington K.A."/>
            <person name="Clark A.G."/>
            <person name="Waterman M.S."/>
            <person name="Eichler E.E."/>
            <person name="Adams M.D."/>
            <person name="Hunkapiller M.W."/>
            <person name="Myers E.W."/>
            <person name="Venter J.C."/>
        </authorList>
    </citation>
    <scope>NUCLEOTIDE SEQUENCE [LARGE SCALE GENOMIC DNA]</scope>
</reference>
<evidence type="ECO:0000250" key="1">
    <source>
        <dbReference type="UniProtKB" id="O14520"/>
    </source>
</evidence>
<evidence type="ECO:0000305" key="2"/>
<evidence type="ECO:0000312" key="3">
    <source>
        <dbReference type="HGNC" id="HGNC:53895"/>
    </source>
</evidence>
<keyword id="KW-0472">Membrane</keyword>
<keyword id="KW-1185">Reference proteome</keyword>
<keyword id="KW-0812">Transmembrane</keyword>
<keyword id="KW-1133">Transmembrane helix</keyword>
<keyword id="KW-0813">Transport</keyword>
<comment type="function">
    <text evidence="1">Aquaglyceroporins form homotetrameric transmembrane channels, with each monomer independently mediating glycerol and water transport across the plasma membrane along their osmotic gradient.</text>
</comment>
<comment type="catalytic activity">
    <reaction evidence="1">
        <text>glycerol(in) = glycerol(out)</text>
        <dbReference type="Rhea" id="RHEA:29675"/>
        <dbReference type="ChEBI" id="CHEBI:17754"/>
    </reaction>
</comment>
<comment type="catalytic activity">
    <reaction evidence="1">
        <text>H2O(in) = H2O(out)</text>
        <dbReference type="Rhea" id="RHEA:29667"/>
        <dbReference type="ChEBI" id="CHEBI:15377"/>
    </reaction>
</comment>
<comment type="subunit">
    <text evidence="1">Homotetramer; each monomer provides an independent glycerol/water pore.</text>
</comment>
<comment type="subcellular location">
    <subcellularLocation>
        <location evidence="1">Membrane</location>
        <topology evidence="1">Multi-pass membrane protein</topology>
    </subcellularLocation>
</comment>
<comment type="domain">
    <text evidence="1">Aquaporins contain two tandem repeats each containing three membrane-spanning domains and a pore-forming loop with the signature motif Asn-Pro/Ala-Ala/Ser (NPA).</text>
</comment>
<comment type="similarity">
    <text evidence="2">Belongs to the MIP/aquaporin (TC 1.A.8) family.</text>
</comment>
<gene>
    <name evidence="3" type="primary">AQP7B</name>
</gene>
<sequence>MVQASGHRRSTRGSKMVSWSVIAKIQEIWCEEDERKMVREFLAEFMSTYVMMVFGLGSVAHMVLNKTYGSYLGVNLGFGFGVTMGVHVAGRISGAHMNAAVTFTNCALGRVPWRKFPVHVLGQFLGSFLAAATIYSLFYTAILHFSGGELMVTGPFATAGIFATYLPDHMTLWRGFLNEEWLTRMLQLCLFTITDQENNPALPGTHALVISILVVIIRVSHGINTGYAINPSRDPPPSIFTFIAGWGKQVFSDGENWWWVPVVAPLLGASLGGIIYLVFIGSTIPREPLKLEDSVAYEDHGITVLPKMGSHEPMISPLTLISVSLANRSSVHSAPPLHESMALEHF</sequence>
<dbReference type="EMBL" id="AL137070">
    <property type="protein sequence ID" value="CAD13298.1"/>
    <property type="molecule type" value="Genomic_DNA"/>
</dbReference>
<dbReference type="EMBL" id="AL845331">
    <property type="status" value="NOT_ANNOTATED_CDS"/>
    <property type="molecule type" value="Genomic_DNA"/>
</dbReference>
<dbReference type="EMBL" id="CH471219">
    <property type="protein sequence ID" value="EAX10691.1"/>
    <property type="molecule type" value="Genomic_DNA"/>
</dbReference>
<dbReference type="CCDS" id="CCDS92802.1"/>
<dbReference type="RefSeq" id="NP_001369426.1">
    <property type="nucleotide sequence ID" value="NM_001382497.1"/>
</dbReference>
<dbReference type="SMR" id="A0A075B734"/>
<dbReference type="FunCoup" id="A0A075B734">
    <property type="interactions" value="9"/>
</dbReference>
<dbReference type="STRING" id="9606.ENSP00000456868"/>
<dbReference type="BioMuta" id="ENSG00000259916"/>
<dbReference type="MassIVE" id="A0A075B734"/>
<dbReference type="PaxDb" id="9606-ENSP00000456868"/>
<dbReference type="Ensembl" id="ENST00000561882.2">
    <property type="protein sequence ID" value="ENSP00000456868.2"/>
    <property type="gene ID" value="ENSG00000259916.2"/>
</dbReference>
<dbReference type="Ensembl" id="ENST00000696097.1">
    <property type="protein sequence ID" value="ENSP00000512393.1"/>
    <property type="gene ID" value="ENSG00000259916.2"/>
</dbReference>
<dbReference type="GeneID" id="100509620"/>
<dbReference type="MANE-Select" id="ENST00000561882.2">
    <property type="protein sequence ID" value="ENSP00000456868.2"/>
    <property type="RefSeq nucleotide sequence ID" value="NM_001382497.1"/>
    <property type="RefSeq protein sequence ID" value="NP_001369426.1"/>
</dbReference>
<dbReference type="UCSC" id="uc061lsj.1">
    <property type="organism name" value="human"/>
</dbReference>
<dbReference type="AGR" id="HGNC:53895"/>
<dbReference type="GeneCards" id="AQP7B"/>
<dbReference type="HGNC" id="HGNC:53895">
    <property type="gene designation" value="AQP7B"/>
</dbReference>
<dbReference type="VEuPathDB" id="HostDB:ENSG00000259916"/>
<dbReference type="eggNOG" id="KOG0224">
    <property type="taxonomic scope" value="Eukaryota"/>
</dbReference>
<dbReference type="GeneTree" id="ENSGT00940000159054"/>
<dbReference type="HOGENOM" id="CLU_020019_9_1_1"/>
<dbReference type="InParanoid" id="A0A075B734"/>
<dbReference type="OMA" id="ATIYICV"/>
<dbReference type="OrthoDB" id="3222at2759"/>
<dbReference type="PAN-GO" id="A0A075B734">
    <property type="GO annotations" value="7 GO annotations based on evolutionary models"/>
</dbReference>
<dbReference type="PhylomeDB" id="A0A075B734"/>
<dbReference type="ChiTaRS" id="AQP7P1">
    <property type="organism name" value="human"/>
</dbReference>
<dbReference type="PRO" id="PR:A0A075B734"/>
<dbReference type="Proteomes" id="UP000005640">
    <property type="component" value="Chromosome 2"/>
</dbReference>
<dbReference type="RNAct" id="A0A075B734">
    <property type="molecule type" value="protein"/>
</dbReference>
<dbReference type="Bgee" id="ENSG00000259916">
    <property type="expression patterns" value="Expressed in subcutaneous adipose tissue and 47 other cell types or tissues"/>
</dbReference>
<dbReference type="GO" id="GO:0016323">
    <property type="term" value="C:basolateral plasma membrane"/>
    <property type="evidence" value="ECO:0000318"/>
    <property type="project" value="GO_Central"/>
</dbReference>
<dbReference type="GO" id="GO:0005886">
    <property type="term" value="C:plasma membrane"/>
    <property type="evidence" value="ECO:0000318"/>
    <property type="project" value="GO_Central"/>
</dbReference>
<dbReference type="GO" id="GO:0015254">
    <property type="term" value="F:glycerol channel activity"/>
    <property type="evidence" value="ECO:0000318"/>
    <property type="project" value="GO_Central"/>
</dbReference>
<dbReference type="GO" id="GO:0015250">
    <property type="term" value="F:water channel activity"/>
    <property type="evidence" value="ECO:0000318"/>
    <property type="project" value="GO_Central"/>
</dbReference>
<dbReference type="GO" id="GO:0015793">
    <property type="term" value="P:glycerol transmembrane transport"/>
    <property type="evidence" value="ECO:0000318"/>
    <property type="project" value="GO_Central"/>
</dbReference>
<dbReference type="GO" id="GO:0006833">
    <property type="term" value="P:water transport"/>
    <property type="evidence" value="ECO:0000318"/>
    <property type="project" value="GO_Central"/>
</dbReference>
<dbReference type="CDD" id="cd00333">
    <property type="entry name" value="MIP"/>
    <property type="match status" value="1"/>
</dbReference>
<dbReference type="FunFam" id="1.20.1080.10:FF:000005">
    <property type="entry name" value="Aquaporin 3"/>
    <property type="match status" value="1"/>
</dbReference>
<dbReference type="Gene3D" id="1.20.1080.10">
    <property type="entry name" value="Glycerol uptake facilitator protein"/>
    <property type="match status" value="1"/>
</dbReference>
<dbReference type="InterPro" id="IPR023271">
    <property type="entry name" value="Aquaporin-like"/>
</dbReference>
<dbReference type="InterPro" id="IPR000425">
    <property type="entry name" value="MIP"/>
</dbReference>
<dbReference type="InterPro" id="IPR050363">
    <property type="entry name" value="MIP/Aquaporin"/>
</dbReference>
<dbReference type="NCBIfam" id="TIGR00861">
    <property type="entry name" value="MIP"/>
    <property type="match status" value="1"/>
</dbReference>
<dbReference type="PANTHER" id="PTHR43829">
    <property type="entry name" value="AQUAPORIN OR AQUAGLYCEROPORIN RELATED"/>
    <property type="match status" value="1"/>
</dbReference>
<dbReference type="PANTHER" id="PTHR43829:SF12">
    <property type="entry name" value="AQUAPORIN-7B"/>
    <property type="match status" value="1"/>
</dbReference>
<dbReference type="Pfam" id="PF00230">
    <property type="entry name" value="MIP"/>
    <property type="match status" value="1"/>
</dbReference>
<dbReference type="PRINTS" id="PR02019">
    <property type="entry name" value="AQUAPORIN7"/>
</dbReference>
<dbReference type="PRINTS" id="PR00783">
    <property type="entry name" value="MINTRINSICP"/>
</dbReference>
<dbReference type="SUPFAM" id="SSF81338">
    <property type="entry name" value="Aquaporin-like"/>
    <property type="match status" value="1"/>
</dbReference>
<protein>
    <recommendedName>
        <fullName evidence="1">Putative aquaporin-7B</fullName>
    </recommendedName>
</protein>
<proteinExistence type="inferred from homology"/>
<organism>
    <name type="scientific">Homo sapiens</name>
    <name type="common">Human</name>
    <dbReference type="NCBI Taxonomy" id="9606"/>
    <lineage>
        <taxon>Eukaryota</taxon>
        <taxon>Metazoa</taxon>
        <taxon>Chordata</taxon>
        <taxon>Craniata</taxon>
        <taxon>Vertebrata</taxon>
        <taxon>Euteleostomi</taxon>
        <taxon>Mammalia</taxon>
        <taxon>Eutheria</taxon>
        <taxon>Euarchontoglires</taxon>
        <taxon>Primates</taxon>
        <taxon>Haplorrhini</taxon>
        <taxon>Catarrhini</taxon>
        <taxon>Hominidae</taxon>
        <taxon>Homo</taxon>
    </lineage>
</organism>
<feature type="topological domain" description="Cytoplasmic" evidence="2">
    <location>
        <begin position="1"/>
        <end position="40"/>
    </location>
</feature>
<feature type="transmembrane region" description="Helical; Name=1" evidence="1">
    <location>
        <begin position="41"/>
        <end position="58"/>
    </location>
</feature>
<feature type="topological domain" description="Extracellular" evidence="2">
    <location>
        <begin position="59"/>
        <end position="71"/>
    </location>
</feature>
<feature type="transmembrane region" description="Helical; Name=2" evidence="1">
    <location>
        <begin position="72"/>
        <end position="89"/>
    </location>
</feature>
<feature type="topological domain" description="Cytoplasmic" evidence="2">
    <location>
        <begin position="90"/>
        <end position="93"/>
    </location>
</feature>
<feature type="intramembrane region" description="Discontinuously helical" evidence="1">
    <location>
        <begin position="94"/>
        <end position="107"/>
    </location>
</feature>
<feature type="topological domain" description="Cytoplasmic" evidence="2">
    <location>
        <begin position="108"/>
        <end position="115"/>
    </location>
</feature>
<feature type="transmembrane region" description="Helical; Name=3" evidence="1">
    <location>
        <begin position="116"/>
        <end position="136"/>
    </location>
</feature>
<feature type="topological domain" description="Extracellular" evidence="2">
    <location>
        <begin position="137"/>
        <end position="174"/>
    </location>
</feature>
<feature type="transmembrane region" description="Helical; Name=4" evidence="1">
    <location>
        <begin position="175"/>
        <end position="192"/>
    </location>
</feature>
<feature type="topological domain" description="Cytoplasmic" evidence="2">
    <location>
        <begin position="193"/>
        <end position="204"/>
    </location>
</feature>
<feature type="transmembrane region" description="Helical; Name=5" evidence="1">
    <location>
        <begin position="205"/>
        <end position="221"/>
    </location>
</feature>
<feature type="topological domain" description="Extracellular" evidence="2">
    <location>
        <begin position="222"/>
        <end position="225"/>
    </location>
</feature>
<feature type="intramembrane region" description="Discontinuously helical" evidence="1">
    <location>
        <begin position="226"/>
        <end position="239"/>
    </location>
</feature>
<feature type="topological domain" description="Extracellular" evidence="2">
    <location>
        <begin position="240"/>
        <end position="257"/>
    </location>
</feature>
<feature type="transmembrane region" description="Helical; Name=6" evidence="1">
    <location>
        <begin position="258"/>
        <end position="279"/>
    </location>
</feature>
<feature type="topological domain" description="Cytoplasmic" evidence="2">
    <location>
        <begin position="280"/>
        <end position="346"/>
    </location>
</feature>
<feature type="short sequence motif" description="NPA 1" evidence="1">
    <location>
        <begin position="98"/>
        <end position="100"/>
    </location>
</feature>
<feature type="short sequence motif" description="NPA 2" evidence="1">
    <location>
        <begin position="230"/>
        <end position="232"/>
    </location>
</feature>
<feature type="site" description="Selectivity filter" evidence="1">
    <location>
        <position position="78"/>
    </location>
</feature>
<feature type="site" description="Selectivity filter" evidence="1">
    <location>
        <position position="227"/>
    </location>
</feature>
<feature type="site" description="Selectivity filter" evidence="1">
    <location>
        <position position="233"/>
    </location>
</feature>
<accession>A0A075B734</accession>
<accession>Q8WX69</accession>
<name>AQP7B_HUMAN</name>